<comment type="similarity">
    <text evidence="1">Belongs to the eukaryotic ribosomal protein eL39 family.</text>
</comment>
<reference key="1">
    <citation type="journal article" date="2004" name="Proc. Natl. Acad. Sci. U.S.A.">
        <title>Genome sequence of Picrophilus torridus and its implications for life around pH 0.</title>
        <authorList>
            <person name="Fuetterer O."/>
            <person name="Angelov A."/>
            <person name="Liesegang H."/>
            <person name="Gottschalk G."/>
            <person name="Schleper C."/>
            <person name="Schepers B."/>
            <person name="Dock C."/>
            <person name="Antranikian G."/>
            <person name="Liebl W."/>
        </authorList>
    </citation>
    <scope>NUCLEOTIDE SEQUENCE [LARGE SCALE GENOMIC DNA]</scope>
    <source>
        <strain>ATCC 700027 / DSM 9790 / JCM 10055 / NBRC 100828 / KAW 2/3</strain>
    </source>
</reference>
<evidence type="ECO:0000255" key="1">
    <source>
        <dbReference type="HAMAP-Rule" id="MF_00629"/>
    </source>
</evidence>
<evidence type="ECO:0000305" key="2"/>
<organism>
    <name type="scientific">Picrophilus torridus (strain ATCC 700027 / DSM 9790 / JCM 10055 / NBRC 100828 / KAW 2/3)</name>
    <dbReference type="NCBI Taxonomy" id="1122961"/>
    <lineage>
        <taxon>Archaea</taxon>
        <taxon>Methanobacteriati</taxon>
        <taxon>Thermoplasmatota</taxon>
        <taxon>Thermoplasmata</taxon>
        <taxon>Thermoplasmatales</taxon>
        <taxon>Picrophilaceae</taxon>
        <taxon>Picrophilus</taxon>
    </lineage>
</organism>
<feature type="chain" id="PRO_0000127055" description="Large ribosomal subunit protein eL39">
    <location>
        <begin position="1"/>
        <end position="51"/>
    </location>
</feature>
<proteinExistence type="inferred from homology"/>
<keyword id="KW-0687">Ribonucleoprotein</keyword>
<keyword id="KW-0689">Ribosomal protein</keyword>
<name>RL39_PICTO</name>
<accession>Q6L2L2</accession>
<gene>
    <name evidence="1" type="primary">rpl39e</name>
    <name type="ordered locus">PTO0205</name>
</gene>
<sequence length="51" mass="6179">MARNKPLGLKIRLMKAVKSNRRVPGWVMVKTDRRVTQNYKRRNWRRSNLKA</sequence>
<protein>
    <recommendedName>
        <fullName evidence="1">Large ribosomal subunit protein eL39</fullName>
    </recommendedName>
    <alternativeName>
        <fullName evidence="2">50S ribosomal protein L39e</fullName>
    </alternativeName>
</protein>
<dbReference type="EMBL" id="AE017261">
    <property type="protein sequence ID" value="AAT42790.1"/>
    <property type="molecule type" value="Genomic_DNA"/>
</dbReference>
<dbReference type="RefSeq" id="WP_011177006.1">
    <property type="nucleotide sequence ID" value="NC_005877.1"/>
</dbReference>
<dbReference type="SMR" id="Q6L2L2"/>
<dbReference type="FunCoup" id="Q6L2L2">
    <property type="interactions" value="94"/>
</dbReference>
<dbReference type="STRING" id="263820.PTO0205"/>
<dbReference type="PaxDb" id="263820-PTO0205"/>
<dbReference type="GeneID" id="2844009"/>
<dbReference type="KEGG" id="pto:PTO0205"/>
<dbReference type="eggNOG" id="arCOG04177">
    <property type="taxonomic scope" value="Archaea"/>
</dbReference>
<dbReference type="HOGENOM" id="CLU_181948_4_0_2"/>
<dbReference type="InParanoid" id="Q6L2L2"/>
<dbReference type="OrthoDB" id="65887at2157"/>
<dbReference type="Proteomes" id="UP000000438">
    <property type="component" value="Chromosome"/>
</dbReference>
<dbReference type="GO" id="GO:1990904">
    <property type="term" value="C:ribonucleoprotein complex"/>
    <property type="evidence" value="ECO:0007669"/>
    <property type="project" value="UniProtKB-KW"/>
</dbReference>
<dbReference type="GO" id="GO:0005840">
    <property type="term" value="C:ribosome"/>
    <property type="evidence" value="ECO:0007669"/>
    <property type="project" value="UniProtKB-KW"/>
</dbReference>
<dbReference type="GO" id="GO:0003735">
    <property type="term" value="F:structural constituent of ribosome"/>
    <property type="evidence" value="ECO:0007669"/>
    <property type="project" value="InterPro"/>
</dbReference>
<dbReference type="GO" id="GO:0006412">
    <property type="term" value="P:translation"/>
    <property type="evidence" value="ECO:0007669"/>
    <property type="project" value="UniProtKB-UniRule"/>
</dbReference>
<dbReference type="FunFam" id="1.10.1620.10:FF:000001">
    <property type="entry name" value="60S ribosomal protein-like L39"/>
    <property type="match status" value="1"/>
</dbReference>
<dbReference type="Gene3D" id="1.10.1620.10">
    <property type="entry name" value="Ribosomal protein L39e"/>
    <property type="match status" value="1"/>
</dbReference>
<dbReference type="HAMAP" id="MF_00629">
    <property type="entry name" value="Ribosomal_eL39"/>
    <property type="match status" value="1"/>
</dbReference>
<dbReference type="InterPro" id="IPR000077">
    <property type="entry name" value="Ribosomal_eL39"/>
</dbReference>
<dbReference type="InterPro" id="IPR020083">
    <property type="entry name" value="Ribosomal_eL39_CS"/>
</dbReference>
<dbReference type="InterPro" id="IPR023626">
    <property type="entry name" value="Ribosomal_eL39_dom_sf"/>
</dbReference>
<dbReference type="NCBIfam" id="NF002316">
    <property type="entry name" value="PRK01242.1"/>
    <property type="match status" value="1"/>
</dbReference>
<dbReference type="Pfam" id="PF00832">
    <property type="entry name" value="Ribosomal_L39"/>
    <property type="match status" value="1"/>
</dbReference>
<dbReference type="SUPFAM" id="SSF48662">
    <property type="entry name" value="Ribosomal protein L39e"/>
    <property type="match status" value="1"/>
</dbReference>
<dbReference type="PROSITE" id="PS00051">
    <property type="entry name" value="RIBOSOMAL_L39E"/>
    <property type="match status" value="1"/>
</dbReference>